<sequence length="43" mass="4793">MRDTAMSQRKDDHLDIVLDERTAPATVAAGRECIRFELSSDGD</sequence>
<keyword id="KW-0614">Plasmid</keyword>
<keyword id="KW-1185">Reference proteome</keyword>
<comment type="caution">
    <text evidence="1">Could be the product of a pseudogene.</text>
</comment>
<gene>
    <name type="ordered locus">NGR_a02780</name>
    <name type="ORF">y4kR</name>
</gene>
<organism>
    <name type="scientific">Sinorhizobium fredii (strain NBRC 101917 / NGR234)</name>
    <dbReference type="NCBI Taxonomy" id="394"/>
    <lineage>
        <taxon>Bacteria</taxon>
        <taxon>Pseudomonadati</taxon>
        <taxon>Pseudomonadota</taxon>
        <taxon>Alphaproteobacteria</taxon>
        <taxon>Hyphomicrobiales</taxon>
        <taxon>Rhizobiaceae</taxon>
        <taxon>Sinorhizobium/Ensifer group</taxon>
        <taxon>Sinorhizobium</taxon>
    </lineage>
</organism>
<reference key="1">
    <citation type="journal article" date="1997" name="Nature">
        <title>Molecular basis of symbiosis between Rhizobium and legumes.</title>
        <authorList>
            <person name="Freiberg C.A."/>
            <person name="Fellay R."/>
            <person name="Bairoch A."/>
            <person name="Broughton W.J."/>
            <person name="Rosenthal A."/>
            <person name="Perret X."/>
        </authorList>
    </citation>
    <scope>NUCLEOTIDE SEQUENCE [LARGE SCALE GENOMIC DNA]</scope>
    <source>
        <strain>NBRC 101917 / NGR234</strain>
    </source>
</reference>
<reference key="2">
    <citation type="journal article" date="2009" name="Appl. Environ. Microbiol.">
        <title>Rhizobium sp. strain NGR234 possesses a remarkable number of secretion systems.</title>
        <authorList>
            <person name="Schmeisser C."/>
            <person name="Liesegang H."/>
            <person name="Krysciak D."/>
            <person name="Bakkou N."/>
            <person name="Le Quere A."/>
            <person name="Wollherr A."/>
            <person name="Heinemeyer I."/>
            <person name="Morgenstern B."/>
            <person name="Pommerening-Roeser A."/>
            <person name="Flores M."/>
            <person name="Palacios R."/>
            <person name="Brenner S."/>
            <person name="Gottschalk G."/>
            <person name="Schmitz R.A."/>
            <person name="Broughton W.J."/>
            <person name="Perret X."/>
            <person name="Strittmatter A.W."/>
            <person name="Streit W.R."/>
        </authorList>
    </citation>
    <scope>NUCLEOTIDE SEQUENCE [LARGE SCALE GENOMIC DNA]</scope>
    <source>
        <strain>NBRC 101917 / NGR234</strain>
    </source>
</reference>
<evidence type="ECO:0000305" key="1"/>
<geneLocation type="plasmid">
    <name>sym pNGR234a</name>
</geneLocation>
<accession>P55536</accession>
<proteinExistence type="uncertain"/>
<name>Y4KR_SINFN</name>
<feature type="chain" id="PRO_0000200897" description="Putative uncharacterized protein y4kR">
    <location>
        <begin position="1"/>
        <end position="43"/>
    </location>
</feature>
<dbReference type="EMBL" id="U00090">
    <property type="protein sequence ID" value="AAB91749.1"/>
    <property type="molecule type" value="Genomic_DNA"/>
</dbReference>
<dbReference type="PIR" id="T10872">
    <property type="entry name" value="T10872"/>
</dbReference>
<dbReference type="RefSeq" id="NP_443947.1">
    <property type="nucleotide sequence ID" value="NC_000914.2"/>
</dbReference>
<dbReference type="KEGG" id="rhi:NGR_a02780"/>
<dbReference type="PATRIC" id="fig|394.7.peg.296"/>
<dbReference type="HOGENOM" id="CLU_3238710_0_0_5"/>
<dbReference type="OrthoDB" id="9795032at2"/>
<dbReference type="Proteomes" id="UP000001054">
    <property type="component" value="Plasmid pNGR234a"/>
</dbReference>
<protein>
    <recommendedName>
        <fullName>Putative uncharacterized protein y4kR</fullName>
    </recommendedName>
</protein>